<protein>
    <recommendedName>
        <fullName evidence="1">UDP-2,3-diacylglucosamine hydrolase</fullName>
        <ecNumber evidence="1">3.6.1.54</ecNumber>
    </recommendedName>
    <alternativeName>
        <fullName evidence="1">UDP-2,3-diacylglucosamine diphosphatase</fullName>
    </alternativeName>
</protein>
<comment type="function">
    <text evidence="1">Hydrolyzes the pyrophosphate bond of UDP-2,3-diacylglucosamine to yield 2,3-diacylglucosamine 1-phosphate (lipid X) and UMP by catalyzing the attack of water at the alpha-P atom. Involved in the biosynthesis of lipid A, a phosphorylated glycolipid that anchors the lipopolysaccharide to the outer membrane of the cell.</text>
</comment>
<comment type="catalytic activity">
    <reaction evidence="1">
        <text>UDP-2-N,3-O-bis[(3R)-3-hydroxytetradecanoyl]-alpha-D-glucosamine + H2O = 2-N,3-O-bis[(3R)-3-hydroxytetradecanoyl]-alpha-D-glucosaminyl 1-phosphate + UMP + 2 H(+)</text>
        <dbReference type="Rhea" id="RHEA:25213"/>
        <dbReference type="ChEBI" id="CHEBI:15377"/>
        <dbReference type="ChEBI" id="CHEBI:15378"/>
        <dbReference type="ChEBI" id="CHEBI:57865"/>
        <dbReference type="ChEBI" id="CHEBI:57957"/>
        <dbReference type="ChEBI" id="CHEBI:78847"/>
        <dbReference type="EC" id="3.6.1.54"/>
    </reaction>
</comment>
<comment type="cofactor">
    <cofactor evidence="1">
        <name>Mn(2+)</name>
        <dbReference type="ChEBI" id="CHEBI:29035"/>
    </cofactor>
    <text evidence="1">Binds 2 Mn(2+) ions per subunit in a binuclear metal center.</text>
</comment>
<comment type="pathway">
    <text evidence="1">Glycolipid biosynthesis; lipid IV(A) biosynthesis; lipid IV(A) from (3R)-3-hydroxytetradecanoyl-[acyl-carrier-protein] and UDP-N-acetyl-alpha-D-glucosamine: step 4/6.</text>
</comment>
<comment type="subcellular location">
    <subcellularLocation>
        <location evidence="1">Cell inner membrane</location>
        <topology evidence="1">Peripheral membrane protein</topology>
        <orientation evidence="1">Cytoplasmic side</orientation>
    </subcellularLocation>
</comment>
<comment type="similarity">
    <text evidence="1">Belongs to the LpxH family.</text>
</comment>
<gene>
    <name evidence="1" type="primary">lpxH</name>
    <name type="ordered locus">AHA_2759</name>
</gene>
<proteinExistence type="inferred from homology"/>
<accession>A0KLW6</accession>
<organism>
    <name type="scientific">Aeromonas hydrophila subsp. hydrophila (strain ATCC 7966 / DSM 30187 / BCRC 13018 / CCUG 14551 / JCM 1027 / KCTC 2358 / NCIMB 9240 / NCTC 8049)</name>
    <dbReference type="NCBI Taxonomy" id="380703"/>
    <lineage>
        <taxon>Bacteria</taxon>
        <taxon>Pseudomonadati</taxon>
        <taxon>Pseudomonadota</taxon>
        <taxon>Gammaproteobacteria</taxon>
        <taxon>Aeromonadales</taxon>
        <taxon>Aeromonadaceae</taxon>
        <taxon>Aeromonas</taxon>
    </lineage>
</organism>
<dbReference type="EC" id="3.6.1.54" evidence="1"/>
<dbReference type="EMBL" id="CP000462">
    <property type="protein sequence ID" value="ABK38327.1"/>
    <property type="molecule type" value="Genomic_DNA"/>
</dbReference>
<dbReference type="RefSeq" id="WP_011706567.1">
    <property type="nucleotide sequence ID" value="NC_008570.1"/>
</dbReference>
<dbReference type="RefSeq" id="YP_857267.1">
    <property type="nucleotide sequence ID" value="NC_008570.1"/>
</dbReference>
<dbReference type="SMR" id="A0KLW6"/>
<dbReference type="STRING" id="380703.AHA_2759"/>
<dbReference type="EnsemblBacteria" id="ABK38327">
    <property type="protein sequence ID" value="ABK38327"/>
    <property type="gene ID" value="AHA_2759"/>
</dbReference>
<dbReference type="GeneID" id="4487958"/>
<dbReference type="KEGG" id="aha:AHA_2759"/>
<dbReference type="PATRIC" id="fig|380703.7.peg.2769"/>
<dbReference type="eggNOG" id="COG2908">
    <property type="taxonomic scope" value="Bacteria"/>
</dbReference>
<dbReference type="HOGENOM" id="CLU_074586_0_0_6"/>
<dbReference type="OrthoDB" id="9783283at2"/>
<dbReference type="UniPathway" id="UPA00359">
    <property type="reaction ID" value="UER00480"/>
</dbReference>
<dbReference type="Proteomes" id="UP000000756">
    <property type="component" value="Chromosome"/>
</dbReference>
<dbReference type="GO" id="GO:0005737">
    <property type="term" value="C:cytoplasm"/>
    <property type="evidence" value="ECO:0007669"/>
    <property type="project" value="InterPro"/>
</dbReference>
<dbReference type="GO" id="GO:0019897">
    <property type="term" value="C:extrinsic component of plasma membrane"/>
    <property type="evidence" value="ECO:0007669"/>
    <property type="project" value="UniProtKB-UniRule"/>
</dbReference>
<dbReference type="GO" id="GO:0030145">
    <property type="term" value="F:manganese ion binding"/>
    <property type="evidence" value="ECO:0007669"/>
    <property type="project" value="UniProtKB-UniRule"/>
</dbReference>
<dbReference type="GO" id="GO:0008758">
    <property type="term" value="F:UDP-2,3-diacylglucosamine hydrolase activity"/>
    <property type="evidence" value="ECO:0007669"/>
    <property type="project" value="UniProtKB-UniRule"/>
</dbReference>
<dbReference type="GO" id="GO:0009245">
    <property type="term" value="P:lipid A biosynthetic process"/>
    <property type="evidence" value="ECO:0007669"/>
    <property type="project" value="UniProtKB-UniRule"/>
</dbReference>
<dbReference type="CDD" id="cd07398">
    <property type="entry name" value="MPP_YbbF-LpxH"/>
    <property type="match status" value="1"/>
</dbReference>
<dbReference type="Gene3D" id="3.60.21.10">
    <property type="match status" value="1"/>
</dbReference>
<dbReference type="HAMAP" id="MF_00575">
    <property type="entry name" value="LpxH"/>
    <property type="match status" value="1"/>
</dbReference>
<dbReference type="InterPro" id="IPR004843">
    <property type="entry name" value="Calcineurin-like_PHP_ApaH"/>
</dbReference>
<dbReference type="InterPro" id="IPR043461">
    <property type="entry name" value="LpxH-like"/>
</dbReference>
<dbReference type="InterPro" id="IPR029052">
    <property type="entry name" value="Metallo-depent_PP-like"/>
</dbReference>
<dbReference type="InterPro" id="IPR010138">
    <property type="entry name" value="UDP-diacylglucosamine_Hdrlase"/>
</dbReference>
<dbReference type="NCBIfam" id="TIGR01854">
    <property type="entry name" value="lipid_A_lpxH"/>
    <property type="match status" value="1"/>
</dbReference>
<dbReference type="NCBIfam" id="NF003743">
    <property type="entry name" value="PRK05340.1"/>
    <property type="match status" value="1"/>
</dbReference>
<dbReference type="PANTHER" id="PTHR34990:SF1">
    <property type="entry name" value="UDP-2,3-DIACYLGLUCOSAMINE HYDROLASE"/>
    <property type="match status" value="1"/>
</dbReference>
<dbReference type="PANTHER" id="PTHR34990">
    <property type="entry name" value="UDP-2,3-DIACYLGLUCOSAMINE HYDROLASE-RELATED"/>
    <property type="match status" value="1"/>
</dbReference>
<dbReference type="Pfam" id="PF00149">
    <property type="entry name" value="Metallophos"/>
    <property type="match status" value="1"/>
</dbReference>
<dbReference type="SUPFAM" id="SSF56300">
    <property type="entry name" value="Metallo-dependent phosphatases"/>
    <property type="match status" value="1"/>
</dbReference>
<name>LPXH_AERHH</name>
<feature type="chain" id="PRO_1000025045" description="UDP-2,3-diacylglucosamine hydrolase">
    <location>
        <begin position="1"/>
        <end position="241"/>
    </location>
</feature>
<feature type="binding site" evidence="1">
    <location>
        <position position="8"/>
    </location>
    <ligand>
        <name>Mn(2+)</name>
        <dbReference type="ChEBI" id="CHEBI:29035"/>
        <label>1</label>
    </ligand>
</feature>
<feature type="binding site" evidence="1">
    <location>
        <position position="10"/>
    </location>
    <ligand>
        <name>Mn(2+)</name>
        <dbReference type="ChEBI" id="CHEBI:29035"/>
        <label>1</label>
    </ligand>
</feature>
<feature type="binding site" evidence="1">
    <location>
        <position position="41"/>
    </location>
    <ligand>
        <name>Mn(2+)</name>
        <dbReference type="ChEBI" id="CHEBI:29035"/>
        <label>1</label>
    </ligand>
</feature>
<feature type="binding site" evidence="1">
    <location>
        <position position="41"/>
    </location>
    <ligand>
        <name>Mn(2+)</name>
        <dbReference type="ChEBI" id="CHEBI:29035"/>
        <label>2</label>
    </ligand>
</feature>
<feature type="binding site" evidence="1">
    <location>
        <begin position="79"/>
        <end position="80"/>
    </location>
    <ligand>
        <name>substrate</name>
    </ligand>
</feature>
<feature type="binding site" evidence="1">
    <location>
        <position position="79"/>
    </location>
    <ligand>
        <name>Mn(2+)</name>
        <dbReference type="ChEBI" id="CHEBI:29035"/>
        <label>2</label>
    </ligand>
</feature>
<feature type="binding site" evidence="1">
    <location>
        <position position="114"/>
    </location>
    <ligand>
        <name>Mn(2+)</name>
        <dbReference type="ChEBI" id="CHEBI:29035"/>
        <label>2</label>
    </ligand>
</feature>
<feature type="binding site" evidence="1">
    <location>
        <position position="122"/>
    </location>
    <ligand>
        <name>substrate</name>
    </ligand>
</feature>
<feature type="binding site" evidence="1">
    <location>
        <position position="160"/>
    </location>
    <ligand>
        <name>substrate</name>
    </ligand>
</feature>
<feature type="binding site" evidence="1">
    <location>
        <position position="164"/>
    </location>
    <ligand>
        <name>substrate</name>
    </ligand>
</feature>
<feature type="binding site" evidence="1">
    <location>
        <position position="167"/>
    </location>
    <ligand>
        <name>substrate</name>
    </ligand>
</feature>
<feature type="binding site" evidence="1">
    <location>
        <position position="195"/>
    </location>
    <ligand>
        <name>Mn(2+)</name>
        <dbReference type="ChEBI" id="CHEBI:29035"/>
        <label>2</label>
    </ligand>
</feature>
<feature type="binding site" evidence="1">
    <location>
        <position position="195"/>
    </location>
    <ligand>
        <name>substrate</name>
    </ligand>
</feature>
<feature type="binding site" evidence="1">
    <location>
        <position position="197"/>
    </location>
    <ligand>
        <name>Mn(2+)</name>
        <dbReference type="ChEBI" id="CHEBI:29035"/>
        <label>1</label>
    </ligand>
</feature>
<reference key="1">
    <citation type="journal article" date="2006" name="J. Bacteriol.">
        <title>Genome sequence of Aeromonas hydrophila ATCC 7966T: jack of all trades.</title>
        <authorList>
            <person name="Seshadri R."/>
            <person name="Joseph S.W."/>
            <person name="Chopra A.K."/>
            <person name="Sha J."/>
            <person name="Shaw J."/>
            <person name="Graf J."/>
            <person name="Haft D.H."/>
            <person name="Wu M."/>
            <person name="Ren Q."/>
            <person name="Rosovitz M.J."/>
            <person name="Madupu R."/>
            <person name="Tallon L."/>
            <person name="Kim M."/>
            <person name="Jin S."/>
            <person name="Vuong H."/>
            <person name="Stine O.C."/>
            <person name="Ali A."/>
            <person name="Horneman A.J."/>
            <person name="Heidelberg J.F."/>
        </authorList>
    </citation>
    <scope>NUCLEOTIDE SEQUENCE [LARGE SCALE GENOMIC DNA]</scope>
    <source>
        <strain>ATCC 7966 / DSM 30187 / BCRC 13018 / CCUG 14551 / JCM 1027 / KCTC 2358 / NCIMB 9240 / NCTC 8049</strain>
    </source>
</reference>
<evidence type="ECO:0000255" key="1">
    <source>
        <dbReference type="HAMAP-Rule" id="MF_00575"/>
    </source>
</evidence>
<sequence>MSTLFISDIHLCAQRPDMTAALVRFLAHDAPGADALYVLGDLFEFWIGDDDPNPLHGEVADAFAALSQQGVPLYFIHGNRDFLLGQAFAKRAGMTLLGDPCVIELYGERVVLSHGDLLCTLDEGYQKFRRITQLKWLRWLFLRLPLARRQAIAHKMRGQSQMENAHKSQTIMDVTPAAVDQMLRQHDCRMMIHGHTHRPAIHDFQLDGAPARRIVLGDWFEQGSVLICRPGEQRLEQHALI</sequence>
<keyword id="KW-0997">Cell inner membrane</keyword>
<keyword id="KW-1003">Cell membrane</keyword>
<keyword id="KW-0378">Hydrolase</keyword>
<keyword id="KW-0441">Lipid A biosynthesis</keyword>
<keyword id="KW-0444">Lipid biosynthesis</keyword>
<keyword id="KW-0443">Lipid metabolism</keyword>
<keyword id="KW-0464">Manganese</keyword>
<keyword id="KW-0472">Membrane</keyword>
<keyword id="KW-0479">Metal-binding</keyword>
<keyword id="KW-1185">Reference proteome</keyword>